<proteinExistence type="inferred from homology"/>
<feature type="initiator methionine" description="Removed" evidence="4">
    <location>
        <position position="1"/>
    </location>
</feature>
<feature type="chain" id="PRO_0000260367" description="Caveolin-1">
    <location>
        <begin position="2"/>
        <end position="178"/>
    </location>
</feature>
<feature type="topological domain" description="Cytoplasmic" evidence="6">
    <location>
        <begin position="2"/>
        <end position="104"/>
    </location>
</feature>
<feature type="intramembrane region" description="Helical" evidence="6">
    <location>
        <begin position="105"/>
        <end position="125"/>
    </location>
</feature>
<feature type="topological domain" description="Cytoplasmic" evidence="6">
    <location>
        <begin position="126"/>
        <end position="178"/>
    </location>
</feature>
<feature type="region of interest" description="Required for homooligomerization" evidence="4">
    <location>
        <begin position="2"/>
        <end position="94"/>
    </location>
</feature>
<feature type="region of interest" description="Interaction with CAVIN3" evidence="4">
    <location>
        <begin position="82"/>
        <end position="94"/>
    </location>
</feature>
<feature type="region of interest" description="Interacts with SPRY1, SPRY2, SPRY3 and SPRY4" evidence="3">
    <location>
        <begin position="131"/>
        <end position="142"/>
    </location>
</feature>
<feature type="region of interest" description="Interacts with SPRY1, SPRY2, and SPRY4" evidence="3">
    <location>
        <begin position="149"/>
        <end position="160"/>
    </location>
</feature>
<feature type="region of interest" description="Interacts with SPRY1, SPRY2, SPRY3 and SPRY4" evidence="3">
    <location>
        <begin position="167"/>
        <end position="178"/>
    </location>
</feature>
<feature type="modified residue" description="N-acetylserine" evidence="4">
    <location>
        <position position="2"/>
    </location>
</feature>
<feature type="modified residue" description="Phosphoserine" evidence="2">
    <location>
        <position position="2"/>
    </location>
</feature>
<feature type="modified residue" description="N6-acetyllysine; alternate" evidence="4">
    <location>
        <position position="5"/>
    </location>
</feature>
<feature type="modified residue" description="Phosphotyrosine" evidence="4">
    <location>
        <position position="6"/>
    </location>
</feature>
<feature type="modified residue" description="Phosphoserine" evidence="3">
    <location>
        <position position="9"/>
    </location>
</feature>
<feature type="modified residue" description="Phosphotyrosine; by ABL1" evidence="3">
    <location>
        <position position="14"/>
    </location>
</feature>
<feature type="modified residue" description="Phosphotyrosine" evidence="4">
    <location>
        <position position="25"/>
    </location>
</feature>
<feature type="modified residue" description="Phosphoserine" evidence="4">
    <location>
        <position position="37"/>
    </location>
</feature>
<feature type="lipid moiety-binding region" description="S-palmitoyl cysteine" evidence="1">
    <location>
        <position position="133"/>
    </location>
</feature>
<feature type="lipid moiety-binding region" description="S-palmitoyl cysteine" evidence="1">
    <location>
        <position position="143"/>
    </location>
</feature>
<feature type="lipid moiety-binding region" description="S-palmitoyl cysteine" evidence="1">
    <location>
        <position position="156"/>
    </location>
</feature>
<feature type="cross-link" description="Glycyl lysine isopeptide (Lys-Gly) (interchain with G-Cter in ubiquitin); alternate" evidence="4">
    <location>
        <position position="5"/>
    </location>
</feature>
<feature type="cross-link" description="Glycyl lysine isopeptide (Lys-Gly) (interchain with G-Cter in ubiquitin)" evidence="4">
    <location>
        <position position="26"/>
    </location>
</feature>
<feature type="cross-link" description="Glycyl lysine isopeptide (Lys-Gly) (interchain with G-Cter in ubiquitin)" evidence="4">
    <location>
        <position position="30"/>
    </location>
</feature>
<feature type="cross-link" description="Glycyl lysine isopeptide (Lys-Gly) (interchain with G-Cter in ubiquitin)" evidence="4">
    <location>
        <position position="39"/>
    </location>
</feature>
<feature type="cross-link" description="Glycyl lysine isopeptide (Lys-Gly) (interchain with G-Cter in ubiquitin)" evidence="4">
    <location>
        <position position="47"/>
    </location>
</feature>
<feature type="cross-link" description="Glycyl lysine isopeptide (Lys-Gly) (interchain with G-Cter in ubiquitin)" evidence="4">
    <location>
        <position position="57"/>
    </location>
</feature>
<accession>Q07DY2</accession>
<comment type="function">
    <text evidence="3 4">May act as a scaffolding protein within caveolar membranes. Forms a stable heterooligomeric complex with CAV2 that targets to lipid rafts and drives caveolae formation. Mediates the recruitment of CAVIN proteins (CAVIN1/2/3/4) to the caveolae (By similarity). Interacts directly with G-protein alpha subunits and can functionally regulate their activity (By similarity). Involved in the costimulatory signal essential for T-cell receptor (TCR)-mediated T-cell activation. Its binding to DPP4 induces T-cell proliferation and NF-kappa-B activation in a T-cell receptor/CD3-dependent manner (By similarity). Recruits CTNNB1 to caveolar membranes and may regulate CTNNB1-mediated signaling through the Wnt pathway (By similarity). Negatively regulates TGFB1-mediated activation of SMAD2/3 by mediating the internalization of TGFBR1 from membrane rafts leading to its subsequent degradation (By similarity). Binds 20(S)-hydroxycholesterol (20(S)-OHC) (By similarity).</text>
</comment>
<comment type="subunit">
    <text evidence="2 3 4 5">Homooligomer. Interacts with GLIPR2. Interacts with NOSTRIN (By similarity). Interacts with SNAP25 and STX1A (By similarity). Interacts (via the N-terminus) with DPP4; the interaction is direct (By similarity). Interacts with CTNNB1, CDH1 and JUP. Interacts with PACSIN2; this interaction induces membrane tubulation (By similarity). Interacts with SLC7A9 (By similarity). Interacts with BMX and BTK. Interacts with TGFBR1. Interacts with CAVIN3 (via leucine-zipper domain) in a cholesterol-sensitive manner. Interacts with CAVIN1. Interacts with EHD2 in a cholesterol-dependent manner. Forms a ternary complex with UBXN6 and VCP; mediates CAV1 targeting to lysosomes for degradation. Interacts with ABCG1; this interaction regulates ABCG1-mediated cholesterol efflux (By similarity). Interacts with NEU3; this interaction enhances NEU3 sialidase activity within caveola. Interacts (via C-terminus) with SPRY1, SPRY2 (via C-terminus), SPRY3, and SPRY4 (By similarity). Interacts with IGFBP5; this interaction allows trafficking of IGFBP5 from the plasma membrane to the nucleus (By similarity).</text>
</comment>
<comment type="subcellular location">
    <subcellularLocation>
        <location evidence="1">Golgi apparatus membrane</location>
        <topology evidence="1">Peripheral membrane protein</topology>
    </subcellularLocation>
    <subcellularLocation>
        <location evidence="1">Cell membrane</location>
        <topology evidence="1">Peripheral membrane protein</topology>
    </subcellularLocation>
    <subcellularLocation>
        <location evidence="3">Membrane</location>
        <location evidence="3">Caveola</location>
        <topology evidence="1">Peripheral membrane protein</topology>
    </subcellularLocation>
    <subcellularLocation>
        <location evidence="4">Membrane raft</location>
    </subcellularLocation>
    <text evidence="1">Colocalized with DPP4 in membrane rafts. Potential hairpin-like structure in the membrane. Membrane protein of caveolae (By similarity).</text>
</comment>
<comment type="PTM">
    <text evidence="4">Phosphorylated at Tyr-14 by ABL1 in response to oxidative stress.</text>
</comment>
<comment type="PTM">
    <text evidence="4">Ubiquitinated. Undergo monoubiquitination and multi- and/or polyubiquitination. Monoubiquitination of N-terminal lysines promotes integration in a ternary complex with UBXN6 and VCP which promotes oligomeric CAV1 targeting to lysosomes for degradation. Ubiquitinated by ZNRF1; leading to degradation and modulation of the TLR4-mediated immune response.</text>
</comment>
<comment type="similarity">
    <text evidence="7">Belongs to the caveolin family.</text>
</comment>
<gene>
    <name type="primary">CAV1</name>
</gene>
<sequence length="178" mass="20472">MSGGKYVDSEGHLYTVPIREQGNIYKPNNKAMADELSEKQVYDAHTKEIDLVNRDPKHLNDDVVKIDFEDVIAEPEGTHSFDGIWKASFTTFTVTKYWFYRLLSALFGIPMALIWGIYFAILSFLHIWAVVPCIKSFLIEIQCISRVYSIYVHTVCDPLFEAVGKIFSNVRINLQKEI</sequence>
<organism>
    <name type="scientific">Nomascus leucogenys</name>
    <name type="common">Northern white-cheeked gibbon</name>
    <name type="synonym">Hylobates leucogenys</name>
    <dbReference type="NCBI Taxonomy" id="61853"/>
    <lineage>
        <taxon>Eukaryota</taxon>
        <taxon>Metazoa</taxon>
        <taxon>Chordata</taxon>
        <taxon>Craniata</taxon>
        <taxon>Vertebrata</taxon>
        <taxon>Euteleostomi</taxon>
        <taxon>Mammalia</taxon>
        <taxon>Eutheria</taxon>
        <taxon>Euarchontoglires</taxon>
        <taxon>Primates</taxon>
        <taxon>Haplorrhini</taxon>
        <taxon>Catarrhini</taxon>
        <taxon>Hylobatidae</taxon>
        <taxon>Nomascus</taxon>
    </lineage>
</organism>
<reference key="1">
    <citation type="submission" date="2006-09" db="EMBL/GenBank/DDBJ databases">
        <title>NISC comparative sequencing initiative.</title>
        <authorList>
            <person name="Antonellis A."/>
            <person name="Ayele K."/>
            <person name="Benjamin B."/>
            <person name="Blakesley R.W."/>
            <person name="Boakye A."/>
            <person name="Bouffard G.G."/>
            <person name="Brinkley C."/>
            <person name="Brooks S."/>
            <person name="Chu G."/>
            <person name="Coleman H."/>
            <person name="Engle J."/>
            <person name="Gestole M."/>
            <person name="Greene A."/>
            <person name="Guan X."/>
            <person name="Gupta J."/>
            <person name="Haghighi P."/>
            <person name="Han J."/>
            <person name="Hansen N."/>
            <person name="Ho S.-L."/>
            <person name="Hu P."/>
            <person name="Hunter G."/>
            <person name="Hurle B."/>
            <person name="Idol J.R."/>
            <person name="Kwong P."/>
            <person name="Laric P."/>
            <person name="Larson S."/>
            <person name="Lee-Lin S.-Q."/>
            <person name="Legaspi R."/>
            <person name="Madden M."/>
            <person name="Maduro Q.L."/>
            <person name="Maduro V.B."/>
            <person name="Margulies E.H."/>
            <person name="Masiello C."/>
            <person name="Maskeri B."/>
            <person name="McDowell J."/>
            <person name="Mojidi H.A."/>
            <person name="Mullikin J.C."/>
            <person name="Oestreicher J.S."/>
            <person name="Park M."/>
            <person name="Portnoy M.E."/>
            <person name="Prasad A."/>
            <person name="Puri O."/>
            <person name="Reddix-Dugue N."/>
            <person name="Schandler K."/>
            <person name="Schueler M.G."/>
            <person name="Sison C."/>
            <person name="Stantripop S."/>
            <person name="Stephen E."/>
            <person name="Taye A."/>
            <person name="Thomas J.W."/>
            <person name="Thomas P.J."/>
            <person name="Tsipouri V."/>
            <person name="Ung L."/>
            <person name="Vogt J.L."/>
            <person name="Wetherby K.D."/>
            <person name="Young A."/>
            <person name="Green E.D."/>
        </authorList>
    </citation>
    <scope>NUCLEOTIDE SEQUENCE [LARGE SCALE GENOMIC DNA]</scope>
</reference>
<keyword id="KW-0007">Acetylation</keyword>
<keyword id="KW-1003">Cell membrane</keyword>
<keyword id="KW-0333">Golgi apparatus</keyword>
<keyword id="KW-1017">Isopeptide bond</keyword>
<keyword id="KW-0449">Lipoprotein</keyword>
<keyword id="KW-0472">Membrane</keyword>
<keyword id="KW-0564">Palmitate</keyword>
<keyword id="KW-0597">Phosphoprotein</keyword>
<keyword id="KW-1185">Reference proteome</keyword>
<keyword id="KW-0832">Ubl conjugation</keyword>
<name>CAV1_NOMLE</name>
<protein>
    <recommendedName>
        <fullName>Caveolin-1</fullName>
    </recommendedName>
</protein>
<dbReference type="EMBL" id="DP000194">
    <property type="protein sequence ID" value="ABJ08860.1"/>
    <property type="molecule type" value="Genomic_DNA"/>
</dbReference>
<dbReference type="RefSeq" id="XP_004090253.2">
    <property type="nucleotide sequence ID" value="XM_004090205.3"/>
</dbReference>
<dbReference type="SMR" id="Q07DY2"/>
<dbReference type="FunCoup" id="Q07DY2">
    <property type="interactions" value="1816"/>
</dbReference>
<dbReference type="STRING" id="61853.ENSNLEP00000032226"/>
<dbReference type="GeneID" id="100595808"/>
<dbReference type="eggNOG" id="ENOG502QUK5">
    <property type="taxonomic scope" value="Eukaryota"/>
</dbReference>
<dbReference type="InParanoid" id="Q07DY2"/>
<dbReference type="OrthoDB" id="5917823at2759"/>
<dbReference type="Proteomes" id="UP000001073">
    <property type="component" value="Unplaced"/>
</dbReference>
<dbReference type="GO" id="GO:0005901">
    <property type="term" value="C:caveola"/>
    <property type="evidence" value="ECO:0000250"/>
    <property type="project" value="UniProtKB"/>
</dbReference>
<dbReference type="GO" id="GO:0005768">
    <property type="term" value="C:endosome"/>
    <property type="evidence" value="ECO:0000250"/>
    <property type="project" value="UniProtKB"/>
</dbReference>
<dbReference type="GO" id="GO:0005925">
    <property type="term" value="C:focal adhesion"/>
    <property type="evidence" value="ECO:0007669"/>
    <property type="project" value="TreeGrafter"/>
</dbReference>
<dbReference type="GO" id="GO:0000139">
    <property type="term" value="C:Golgi membrane"/>
    <property type="evidence" value="ECO:0007669"/>
    <property type="project" value="UniProtKB-SubCell"/>
</dbReference>
<dbReference type="GO" id="GO:0045121">
    <property type="term" value="C:membrane raft"/>
    <property type="evidence" value="ECO:0000250"/>
    <property type="project" value="UniProtKB"/>
</dbReference>
<dbReference type="GO" id="GO:0048471">
    <property type="term" value="C:perinuclear region of cytoplasm"/>
    <property type="evidence" value="ECO:0007669"/>
    <property type="project" value="TreeGrafter"/>
</dbReference>
<dbReference type="GO" id="GO:0042383">
    <property type="term" value="C:sarcolemma"/>
    <property type="evidence" value="ECO:0007669"/>
    <property type="project" value="TreeGrafter"/>
</dbReference>
<dbReference type="GO" id="GO:0060090">
    <property type="term" value="F:molecular adaptor activity"/>
    <property type="evidence" value="ECO:0007669"/>
    <property type="project" value="TreeGrafter"/>
</dbReference>
<dbReference type="GO" id="GO:0008142">
    <property type="term" value="F:oxysterol binding"/>
    <property type="evidence" value="ECO:0000250"/>
    <property type="project" value="UniProtKB"/>
</dbReference>
<dbReference type="GO" id="GO:0019901">
    <property type="term" value="F:protein kinase binding"/>
    <property type="evidence" value="ECO:0007669"/>
    <property type="project" value="TreeGrafter"/>
</dbReference>
<dbReference type="GO" id="GO:0044325">
    <property type="term" value="F:transmembrane transporter binding"/>
    <property type="evidence" value="ECO:0007669"/>
    <property type="project" value="TreeGrafter"/>
</dbReference>
<dbReference type="GO" id="GO:0070836">
    <property type="term" value="P:caveola assembly"/>
    <property type="evidence" value="ECO:0007669"/>
    <property type="project" value="InterPro"/>
</dbReference>
<dbReference type="GO" id="GO:0030154">
    <property type="term" value="P:cell differentiation"/>
    <property type="evidence" value="ECO:0007669"/>
    <property type="project" value="TreeGrafter"/>
</dbReference>
<dbReference type="GO" id="GO:0001937">
    <property type="term" value="P:negative regulation of endothelial cell proliferation"/>
    <property type="evidence" value="ECO:0007669"/>
    <property type="project" value="TreeGrafter"/>
</dbReference>
<dbReference type="GO" id="GO:0031623">
    <property type="term" value="P:receptor internalization"/>
    <property type="evidence" value="ECO:0000250"/>
    <property type="project" value="UniProtKB"/>
</dbReference>
<dbReference type="GO" id="GO:0051480">
    <property type="term" value="P:regulation of cytosolic calcium ion concentration"/>
    <property type="evidence" value="ECO:0007669"/>
    <property type="project" value="TreeGrafter"/>
</dbReference>
<dbReference type="GO" id="GO:0031295">
    <property type="term" value="P:T cell costimulation"/>
    <property type="evidence" value="ECO:0000250"/>
    <property type="project" value="UniProtKB"/>
</dbReference>
<dbReference type="InterPro" id="IPR001612">
    <property type="entry name" value="Caveolin"/>
</dbReference>
<dbReference type="InterPro" id="IPR018361">
    <property type="entry name" value="Caveolin_CS"/>
</dbReference>
<dbReference type="PANTHER" id="PTHR10844">
    <property type="entry name" value="CAVEOLIN"/>
    <property type="match status" value="1"/>
</dbReference>
<dbReference type="PANTHER" id="PTHR10844:SF18">
    <property type="entry name" value="CAVEOLIN-1"/>
    <property type="match status" value="1"/>
</dbReference>
<dbReference type="Pfam" id="PF01146">
    <property type="entry name" value="Caveolin"/>
    <property type="match status" value="1"/>
</dbReference>
<dbReference type="PROSITE" id="PS01210">
    <property type="entry name" value="CAVEOLIN"/>
    <property type="match status" value="1"/>
</dbReference>
<evidence type="ECO:0000250" key="1"/>
<evidence type="ECO:0000250" key="2">
    <source>
        <dbReference type="UniProtKB" id="P41350"/>
    </source>
</evidence>
<evidence type="ECO:0000250" key="3">
    <source>
        <dbReference type="UniProtKB" id="P49817"/>
    </source>
</evidence>
<evidence type="ECO:0000250" key="4">
    <source>
        <dbReference type="UniProtKB" id="Q03135"/>
    </source>
</evidence>
<evidence type="ECO:0000250" key="5">
    <source>
        <dbReference type="UniProtKB" id="Q2IBA5"/>
    </source>
</evidence>
<evidence type="ECO:0000255" key="6"/>
<evidence type="ECO:0000305" key="7"/>